<dbReference type="EC" id="3.4.23.36" evidence="1"/>
<dbReference type="EMBL" id="AL123456">
    <property type="protein sequence ID" value="CCP44303.1"/>
    <property type="molecule type" value="Genomic_DNA"/>
</dbReference>
<dbReference type="PIR" id="H70760">
    <property type="entry name" value="H70760"/>
</dbReference>
<dbReference type="RefSeq" id="NP_216055.1">
    <property type="nucleotide sequence ID" value="NC_000962.3"/>
</dbReference>
<dbReference type="RefSeq" id="WP_003407722.1">
    <property type="nucleotide sequence ID" value="NZ_NVQJ01000004.1"/>
</dbReference>
<dbReference type="SMR" id="P9WK99"/>
<dbReference type="FunCoup" id="P9WK99">
    <property type="interactions" value="88"/>
</dbReference>
<dbReference type="STRING" id="83332.Rv1539"/>
<dbReference type="PaxDb" id="83332-Rv1539"/>
<dbReference type="DNASU" id="886408"/>
<dbReference type="GeneID" id="45425522"/>
<dbReference type="GeneID" id="886408"/>
<dbReference type="KEGG" id="mtu:Rv1539"/>
<dbReference type="KEGG" id="mtv:RVBD_1539"/>
<dbReference type="TubercuList" id="Rv1539"/>
<dbReference type="eggNOG" id="COG0597">
    <property type="taxonomic scope" value="Bacteria"/>
</dbReference>
<dbReference type="InParanoid" id="P9WK99"/>
<dbReference type="OrthoDB" id="4308908at2"/>
<dbReference type="PhylomeDB" id="P9WK99"/>
<dbReference type="UniPathway" id="UPA00665"/>
<dbReference type="Proteomes" id="UP000001584">
    <property type="component" value="Chromosome"/>
</dbReference>
<dbReference type="GO" id="GO:0005886">
    <property type="term" value="C:plasma membrane"/>
    <property type="evidence" value="ECO:0000318"/>
    <property type="project" value="GO_Central"/>
</dbReference>
<dbReference type="GO" id="GO:0004190">
    <property type="term" value="F:aspartic-type endopeptidase activity"/>
    <property type="evidence" value="ECO:0007669"/>
    <property type="project" value="UniProtKB-UniRule"/>
</dbReference>
<dbReference type="GO" id="GO:0004175">
    <property type="term" value="F:endopeptidase activity"/>
    <property type="evidence" value="ECO:0000318"/>
    <property type="project" value="GO_Central"/>
</dbReference>
<dbReference type="GO" id="GO:0036211">
    <property type="term" value="P:protein modification process"/>
    <property type="evidence" value="ECO:0000315"/>
    <property type="project" value="UniProtKB"/>
</dbReference>
<dbReference type="GO" id="GO:0006508">
    <property type="term" value="P:proteolysis"/>
    <property type="evidence" value="ECO:0007669"/>
    <property type="project" value="UniProtKB-KW"/>
</dbReference>
<dbReference type="HAMAP" id="MF_00161">
    <property type="entry name" value="LspA"/>
    <property type="match status" value="1"/>
</dbReference>
<dbReference type="InterPro" id="IPR001872">
    <property type="entry name" value="Peptidase_A8"/>
</dbReference>
<dbReference type="NCBIfam" id="TIGR00077">
    <property type="entry name" value="lspA"/>
    <property type="match status" value="1"/>
</dbReference>
<dbReference type="PANTHER" id="PTHR33695">
    <property type="entry name" value="LIPOPROTEIN SIGNAL PEPTIDASE"/>
    <property type="match status" value="1"/>
</dbReference>
<dbReference type="PANTHER" id="PTHR33695:SF1">
    <property type="entry name" value="LIPOPROTEIN SIGNAL PEPTIDASE"/>
    <property type="match status" value="1"/>
</dbReference>
<dbReference type="Pfam" id="PF01252">
    <property type="entry name" value="Peptidase_A8"/>
    <property type="match status" value="1"/>
</dbReference>
<dbReference type="PRINTS" id="PR00781">
    <property type="entry name" value="LIPOSIGPTASE"/>
</dbReference>
<dbReference type="PROSITE" id="PS00855">
    <property type="entry name" value="SPASE_II"/>
    <property type="match status" value="1"/>
</dbReference>
<reference key="1">
    <citation type="journal article" date="1998" name="Nature">
        <title>Deciphering the biology of Mycobacterium tuberculosis from the complete genome sequence.</title>
        <authorList>
            <person name="Cole S.T."/>
            <person name="Brosch R."/>
            <person name="Parkhill J."/>
            <person name="Garnier T."/>
            <person name="Churcher C.M."/>
            <person name="Harris D.E."/>
            <person name="Gordon S.V."/>
            <person name="Eiglmeier K."/>
            <person name="Gas S."/>
            <person name="Barry C.E. III"/>
            <person name="Tekaia F."/>
            <person name="Badcock K."/>
            <person name="Basham D."/>
            <person name="Brown D."/>
            <person name="Chillingworth T."/>
            <person name="Connor R."/>
            <person name="Davies R.M."/>
            <person name="Devlin K."/>
            <person name="Feltwell T."/>
            <person name="Gentles S."/>
            <person name="Hamlin N."/>
            <person name="Holroyd S."/>
            <person name="Hornsby T."/>
            <person name="Jagels K."/>
            <person name="Krogh A."/>
            <person name="McLean J."/>
            <person name="Moule S."/>
            <person name="Murphy L.D."/>
            <person name="Oliver S."/>
            <person name="Osborne J."/>
            <person name="Quail M.A."/>
            <person name="Rajandream M.A."/>
            <person name="Rogers J."/>
            <person name="Rutter S."/>
            <person name="Seeger K."/>
            <person name="Skelton S."/>
            <person name="Squares S."/>
            <person name="Squares R."/>
            <person name="Sulston J.E."/>
            <person name="Taylor K."/>
            <person name="Whitehead S."/>
            <person name="Barrell B.G."/>
        </authorList>
    </citation>
    <scope>NUCLEOTIDE SEQUENCE [LARGE SCALE GENOMIC DNA]</scope>
    <source>
        <strain>ATCC 25618 / H37Rv</strain>
    </source>
</reference>
<reference key="2">
    <citation type="journal article" date="2011" name="Mol. Cell. Proteomics">
        <title>Proteogenomic analysis of Mycobacterium tuberculosis by high resolution mass spectrometry.</title>
        <authorList>
            <person name="Kelkar D.S."/>
            <person name="Kumar D."/>
            <person name="Kumar P."/>
            <person name="Balakrishnan L."/>
            <person name="Muthusamy B."/>
            <person name="Yadav A.K."/>
            <person name="Shrivastava P."/>
            <person name="Marimuthu A."/>
            <person name="Anand S."/>
            <person name="Sundaram H."/>
            <person name="Kingsbury R."/>
            <person name="Harsha H.C."/>
            <person name="Nair B."/>
            <person name="Prasad T.S."/>
            <person name="Chauhan D.S."/>
            <person name="Katoch K."/>
            <person name="Katoch V.M."/>
            <person name="Kumar P."/>
            <person name="Chaerkady R."/>
            <person name="Ramachandran S."/>
            <person name="Dash D."/>
            <person name="Pandey A."/>
        </authorList>
    </citation>
    <scope>IDENTIFICATION BY MASS SPECTROMETRY [LARGE SCALE ANALYSIS]</scope>
    <source>
        <strain>ATCC 25618 / H37Rv</strain>
    </source>
</reference>
<keyword id="KW-0064">Aspartyl protease</keyword>
<keyword id="KW-1003">Cell membrane</keyword>
<keyword id="KW-0378">Hydrolase</keyword>
<keyword id="KW-0472">Membrane</keyword>
<keyword id="KW-0645">Protease</keyword>
<keyword id="KW-1185">Reference proteome</keyword>
<keyword id="KW-0812">Transmembrane</keyword>
<keyword id="KW-1133">Transmembrane helix</keyword>
<sequence length="202" mass="21345">MPDEPTGSADPLTSTEEAGGAGEPNAPAPPRRLRMLLSVAVVVLTLDIVTKVVAVQLLPPGQPVSIIGDTVTWTLVRNSGAAFSMATGYTWVLTLIATGVVVGIFWMGRRLVSPWWALGLGMILGGAMGNLVDRFFRAPGPLRGHVVDFLSVGWWPVFNVADPSVVGGAILLVILSIFGFDFDTVGRRHADGDTVGRRKADG</sequence>
<evidence type="ECO:0000255" key="1">
    <source>
        <dbReference type="HAMAP-Rule" id="MF_00161"/>
    </source>
</evidence>
<evidence type="ECO:0000256" key="2">
    <source>
        <dbReference type="SAM" id="MobiDB-lite"/>
    </source>
</evidence>
<evidence type="ECO:0000305" key="3"/>
<comment type="function">
    <text evidence="1">This protein specifically catalyzes the removal of signal peptides from prolipoproteins.</text>
</comment>
<comment type="catalytic activity">
    <reaction evidence="1">
        <text>Release of signal peptides from bacterial membrane prolipoproteins. Hydrolyzes -Xaa-Yaa-Zaa-|-(S,diacylglyceryl)Cys-, in which Xaa is hydrophobic (preferably Leu), and Yaa (Ala or Ser) and Zaa (Gly or Ala) have small, neutral side chains.</text>
        <dbReference type="EC" id="3.4.23.36"/>
    </reaction>
</comment>
<comment type="pathway">
    <text evidence="1">Protein modification; lipoprotein biosynthesis (signal peptide cleavage).</text>
</comment>
<comment type="subcellular location">
    <subcellularLocation>
        <location evidence="1">Cell membrane</location>
        <topology evidence="1">Multi-pass membrane protein</topology>
    </subcellularLocation>
</comment>
<comment type="similarity">
    <text evidence="1 3">Belongs to the peptidase A8 family.</text>
</comment>
<proteinExistence type="evidence at protein level"/>
<name>LSPA_MYCTU</name>
<organism>
    <name type="scientific">Mycobacterium tuberculosis (strain ATCC 25618 / H37Rv)</name>
    <dbReference type="NCBI Taxonomy" id="83332"/>
    <lineage>
        <taxon>Bacteria</taxon>
        <taxon>Bacillati</taxon>
        <taxon>Actinomycetota</taxon>
        <taxon>Actinomycetes</taxon>
        <taxon>Mycobacteriales</taxon>
        <taxon>Mycobacteriaceae</taxon>
        <taxon>Mycobacterium</taxon>
        <taxon>Mycobacterium tuberculosis complex</taxon>
    </lineage>
</organism>
<accession>P9WK99</accession>
<accession>L0T9X3</accession>
<accession>P65262</accession>
<accession>Q10764</accession>
<protein>
    <recommendedName>
        <fullName evidence="1">Lipoprotein signal peptidase</fullName>
        <ecNumber evidence="1">3.4.23.36</ecNumber>
    </recommendedName>
    <alternativeName>
        <fullName evidence="1">Prolipoprotein signal peptidase</fullName>
    </alternativeName>
    <alternativeName>
        <fullName evidence="1">Signal peptidase II</fullName>
        <shortName evidence="1">SPase II</shortName>
    </alternativeName>
</protein>
<feature type="chain" id="PRO_0000178798" description="Lipoprotein signal peptidase">
    <location>
        <begin position="1"/>
        <end position="202"/>
    </location>
</feature>
<feature type="transmembrane region" description="Helical" evidence="1">
    <location>
        <begin position="35"/>
        <end position="55"/>
    </location>
</feature>
<feature type="transmembrane region" description="Helical" evidence="1">
    <location>
        <begin position="88"/>
        <end position="108"/>
    </location>
</feature>
<feature type="transmembrane region" description="Helical" evidence="1">
    <location>
        <begin position="112"/>
        <end position="132"/>
    </location>
</feature>
<feature type="transmembrane region" description="Helical" evidence="1">
    <location>
        <begin position="160"/>
        <end position="180"/>
    </location>
</feature>
<feature type="region of interest" description="Disordered" evidence="2">
    <location>
        <begin position="1"/>
        <end position="29"/>
    </location>
</feature>
<feature type="active site" evidence="1">
    <location>
        <position position="148"/>
    </location>
</feature>
<feature type="active site" evidence="1">
    <location>
        <position position="162"/>
    </location>
</feature>
<gene>
    <name evidence="1" type="primary">lspA</name>
    <name type="ordered locus">Rv1539</name>
    <name type="ORF">MTCY48.26c</name>
</gene>